<organism>
    <name type="scientific">Rattus norvegicus</name>
    <name type="common">Rat</name>
    <dbReference type="NCBI Taxonomy" id="10116"/>
    <lineage>
        <taxon>Eukaryota</taxon>
        <taxon>Metazoa</taxon>
        <taxon>Chordata</taxon>
        <taxon>Craniata</taxon>
        <taxon>Vertebrata</taxon>
        <taxon>Euteleostomi</taxon>
        <taxon>Mammalia</taxon>
        <taxon>Eutheria</taxon>
        <taxon>Euarchontoglires</taxon>
        <taxon>Glires</taxon>
        <taxon>Rodentia</taxon>
        <taxon>Myomorpha</taxon>
        <taxon>Muroidea</taxon>
        <taxon>Muridae</taxon>
        <taxon>Murinae</taxon>
        <taxon>Rattus</taxon>
    </lineage>
</organism>
<keyword id="KW-0025">Alternative splicing</keyword>
<keyword id="KW-1003">Cell membrane</keyword>
<keyword id="KW-0966">Cell projection</keyword>
<keyword id="KW-1015">Disulfide bond</keyword>
<keyword id="KW-0967">Endosome</keyword>
<keyword id="KW-0297">G-protein coupled receptor</keyword>
<keyword id="KW-0325">Glycoprotein</keyword>
<keyword id="KW-0449">Lipoprotein</keyword>
<keyword id="KW-0472">Membrane</keyword>
<keyword id="KW-0564">Palmitate</keyword>
<keyword id="KW-0597">Phosphoprotein</keyword>
<keyword id="KW-0675">Receptor</keyword>
<keyword id="KW-1185">Reference proteome</keyword>
<keyword id="KW-0807">Transducer</keyword>
<keyword id="KW-0812">Transmembrane</keyword>
<keyword id="KW-1133">Transmembrane helix</keyword>
<keyword id="KW-0832">Ubl conjugation</keyword>
<comment type="function">
    <text evidence="11 12 15 21 22 24 26 27 28 31 32 33 34 35 36 37 38 39">Receptor for endogenous opioids such as beta-endorphin and endomorphin (PubMed:11060299, PubMed:15944153, PubMed:16682964, PubMed:17384143, PubMed:17947509, PubMed:1846076, PubMed:18558479, PubMed:21292762, PubMed:7595566, PubMed:7678862, PubMed:8051154, PubMed:8240812, PubMed:8393525, PubMed:9224819, PubMed:9572309). Receptor for natural and synthetic opioids including morphine, heroin, DAMGO, fentanyl, etorphine, buprenorphin and methadone (PubMed:11060299, PubMed:15944153, PubMed:16682964, PubMed:17384143, PubMed:17947509, PubMed:1846076, PubMed:18558479, PubMed:21292762, PubMed:7595566, PubMed:7678862, PubMed:8051154, PubMed:8240812, PubMed:8393525, PubMed:9224819, PubMed:9572309). Also activated by enkephalin peptides, such as Met-enkephalin or Met-enkephalin-Arg-Phe, with higher affinity for Met-enkephalin-Arg-Phe (PubMed:8624732). Agonist binding to the receptor induces coupling to an inactive GDP-bound heterotrimeric G-protein complex and subsequent exchange of GDP for GTP in the G-protein alpha subunit leading to dissociation of the G-protein complex with the free GTP-bound G-protein alpha and the G-protein beta-gamma dimer activating downstream cellular effectors (PubMed:16682964, PubMed:9224819). The agonist- and cell type-specific activity is predominantly coupled to pertussis toxin-sensitive G(i) and G(o) G alpha proteins, GNAI1, GNAI2, GNAI3 and GNAO1 isoforms Alpha-1 and Alpha-2, and to a lesser extent to pertussis toxin-insensitive G alpha proteins GNAZ and GNA15 (PubMed:9224819, PubMed:9572309). They mediate an array of downstream cellular responses, including inhibition of adenylate cyclase activity and both N-type and L-type calcium channels, activation of inward rectifying potassium channels, mitogen-activated protein kinase (MAPK), phospholipase C (PLC), phosphoinositide/protein kinase (PKC), phosphoinositide 3-kinase (PI3K) and regulation of NF-kappa-B (PubMed:15944153, PubMed:21292762, PubMed:7595566, PubMed:9572309). Also couples to adenylate cyclase stimulatory G alpha proteins (PubMed:7595566). The selective temporal coupling to G-proteins and subsequent signaling can be regulated by RGSZ proteins, such as RGS9, RGS17 and RGS4. Phosphorylation by members of the GPRK subfamily of Ser/Thr protein kinases and association with beta-arrestins is involved in short-term receptor desensitization (PubMed:11060299, PubMed:17384143, PubMed:17947509, PubMed:18558479). Beta-arrestins associate with the GPRK-phosphorylated receptor and uncouple it from the G-protein thus terminating signal transduction. The phosphorylated receptor is internalized through endocytosis via clathrin-coated pits which involves beta-arrestins. The activation of the ERK pathway occurs either in a G-protein-dependent or a beta-arrestin-dependent manner and is regulated by agonist-specific receptor phosphorylation (PubMed:11278523, PubMed:11896051, PubMed:15944153). Acts as a class A G-protein coupled receptor (GPCR) which dissociates from beta-arrestin at or near the plasma membrane and undergoes rapid recycling. Receptor down-regulation pathways are varying with the agonist and occur dependent or independent of G-protein coupling (PubMed:11060299, PubMed:17384143, PubMed:17947509, PubMed:18558479). Endogenous ligands induce rapid desensitization, endocytosis and recycling. Heterooligomerization with other GPCRs can modulate agonist binding, signaling and trafficking properties (PubMed:16682964, PubMed:17384143).</text>
</comment>
<comment type="subunit">
    <text evidence="1 2 10 15 17 18 19 20 22 23 24 25 29">Forms homooligomers and heterooligomers with other GPCRs, such as OPRD1, OPRK1, OPRL1, NPFFR2, ADRA2A, SSTR2, CNR1 and CCR5 (probably in dimeric forms) (PubMed:10842167, PubMed:11896051, PubMed:14645661, PubMed:14729105, PubMed:16682964, PubMed:17384143). Interacts with heterotrimeric G proteins; interaction with a heterotrimeric complex containing GNAI1, GNB1 and GNG2 stabilizes the active conformation of the receptor and increases its affinity for endomorphin-2, the synthetic opioid peptide DAMGO and for morphinan agonists (By similarity). Interacts with PPL; the interaction disrupts agonist-mediated G-protein activation. Interacts (via C-terminus) with DNAJB4 (via C-terminus). Interacts with calmodulin; the interaction inhibits the constitutive activity of OPRM1; it abolishes basal and attenuates agonist-stimulated G-protein coupling (By similarity). Interacts with FLNA, PLD2, RANBP9 and WLS and GPM6A (PubMed:12519790, PubMed:17548356). Interacts with RTP4 (By similarity). Interacts with SYP and GNAS (PubMed:15857684, PubMed:17005904). Interacts with RGS9, RGS17, RGS20, RGS4, PPP1R9B and HINT1 (By similarity).</text>
</comment>
<comment type="interaction">
    <interactant intactId="EBI-4392569">
        <id>P33535</id>
    </interactant>
    <interactant intactId="EBI-6113756">
        <id>Q812E9</id>
        <label>Gpm6a</label>
    </interactant>
    <organismsDiffer>false</organismsDiffer>
    <experiments>7</experiments>
</comment>
<comment type="interaction">
    <interactant intactId="EBI-4392569">
        <id>P33535</id>
    </interactant>
    <interactant intactId="EBI-6140589">
        <id>P70498</id>
        <label>Pld2</label>
    </interactant>
    <organismsDiffer>false</organismsDiffer>
    <experiments>3</experiments>
</comment>
<comment type="interaction">
    <interactant intactId="EBI-4392569">
        <id>P33535</id>
    </interactant>
    <interactant intactId="EBI-976085">
        <id>P07825</id>
        <label>Syp</label>
    </interactant>
    <organismsDiffer>false</organismsDiffer>
    <experiments>8</experiments>
</comment>
<comment type="interaction">
    <interactant intactId="EBI-4392569">
        <id>P33535</id>
    </interactant>
    <interactant intactId="EBI-6113235">
        <id>Q6P689</id>
        <label>Wls</label>
    </interactant>
    <organismsDiffer>false</organismsDiffer>
    <experiments>2</experiments>
</comment>
<comment type="subcellular location">
    <subcellularLocation>
        <location evidence="35 36">Cell membrane</location>
        <topology evidence="2">Multi-pass membrane protein</topology>
    </subcellularLocation>
    <subcellularLocation>
        <location evidence="3">Cell projection</location>
        <location evidence="3">Axon</location>
    </subcellularLocation>
    <subcellularLocation>
        <location evidence="3">Perikaryon</location>
    </subcellularLocation>
    <subcellularLocation>
        <location evidence="3">Cell projection</location>
        <location evidence="3">Dendrite</location>
    </subcellularLocation>
    <subcellularLocation>
        <location evidence="3">Endosome</location>
    </subcellularLocation>
    <text evidence="3">Is rapidly internalized after agonist binding.</text>
</comment>
<comment type="alternative products">
    <event type="alternative splicing"/>
    <isoform>
        <id>P33535-1</id>
        <name>1</name>
        <sequence type="displayed"/>
    </isoform>
    <isoform>
        <id>P33535-2</id>
        <name>2</name>
        <name>MOR1A</name>
        <sequence type="described" ref="VSP_041828"/>
    </isoform>
    <isoform>
        <id>P33535-3</id>
        <name>3</name>
        <name>MOR1R</name>
        <sequence type="described" ref="VSP_041829"/>
    </isoform>
    <isoform>
        <id>P33535-4</id>
        <name>4</name>
        <name>MOR1B</name>
        <sequence type="described" ref="VSP_041830"/>
    </isoform>
    <isoform>
        <id>P33535-5</id>
        <name>5</name>
        <name>MOR1B2</name>
        <sequence type="described" ref="VSP_041831"/>
    </isoform>
    <isoform>
        <id>P33535-6</id>
        <name>6</name>
        <name>MOR1C1</name>
        <sequence type="described" ref="VSP_041832"/>
    </isoform>
    <isoform>
        <id>P33535-7</id>
        <name>7</name>
        <name>MOR-1C2</name>
        <sequence type="described" ref="VSP_041833"/>
    </isoform>
    <isoform>
        <id>P33535-8</id>
        <name>8</name>
        <name>rMOR-1D</name>
        <sequence type="described" ref="VSP_041834"/>
    </isoform>
</comment>
<comment type="tissue specificity">
    <text>Brain. Is expressed in the cerebral cortex, caudate putamen, nucleus accumbens, septal nuclei, thalamus, hippocampus, and habenula. Not detected in cerebellum.</text>
</comment>
<comment type="PTM">
    <text evidence="7 8 9 12 30">Phosphorylated. Differentially phosphorylated in basal and agonist-induced conditions. Agonist-mediated phosphorylation modulates receptor internalization. Phosphorylated by GRK2 in a agonist-dependent manner. Phosphorylation at Tyr-166 requires receptor activation, is dependent on non-receptor protein tyrosine kinase Src and results in a decrease in agonist efficacy by reducing G-protein coupling efficiency. Phosphorylated on tyrosine residues; the phosphorylation is involved in agonist-induced G-protein-independent receptor down-regulation. Phosphorylation at Ser-375 is involved in G-protein-dependent but not beta-arrestin-dependent activation of the ERK pathway.</text>
</comment>
<comment type="PTM">
    <text evidence="2">Ubiquitinated. A basal ubiquitination seems not to be related to degradation. Ubiquitination is increased upon formation of OPRM1:OPRD1 oligomers leading to proteasomal degradation; the ubiquitination is diminished by RTP4.</text>
</comment>
<comment type="similarity">
    <text evidence="5">Belongs to the G-protein coupled receptor 1 family.</text>
</comment>
<comment type="sequence caution" evidence="44">
    <conflict type="frameshift">
        <sequence resource="EMBL-CDS" id="AAQ77387"/>
    </conflict>
</comment>
<name>OPRM_RAT</name>
<feature type="chain" id="PRO_0000069978" description="Mu-type opioid receptor">
    <location>
        <begin position="1"/>
        <end position="398"/>
    </location>
</feature>
<feature type="topological domain" description="Extracellular" evidence="2">
    <location>
        <begin position="1"/>
        <end position="66"/>
    </location>
</feature>
<feature type="transmembrane region" description="Helical; Name=1" evidence="2">
    <location>
        <begin position="67"/>
        <end position="91"/>
    </location>
</feature>
<feature type="topological domain" description="Cytoplasmic" evidence="2">
    <location>
        <begin position="92"/>
        <end position="104"/>
    </location>
</feature>
<feature type="transmembrane region" description="Helical; Name=2" evidence="2">
    <location>
        <begin position="105"/>
        <end position="129"/>
    </location>
</feature>
<feature type="topological domain" description="Extracellular" evidence="2">
    <location>
        <begin position="130"/>
        <end position="140"/>
    </location>
</feature>
<feature type="transmembrane region" description="Helical; Name=3" evidence="2">
    <location>
        <begin position="141"/>
        <end position="163"/>
    </location>
</feature>
<feature type="topological domain" description="Cytoplasmic" evidence="2">
    <location>
        <begin position="164"/>
        <end position="183"/>
    </location>
</feature>
<feature type="transmembrane region" description="Helical; Name=4" evidence="2">
    <location>
        <begin position="184"/>
        <end position="205"/>
    </location>
</feature>
<feature type="topological domain" description="Extracellular" evidence="2">
    <location>
        <begin position="206"/>
        <end position="228"/>
    </location>
</feature>
<feature type="transmembrane region" description="Helical; Name=5" evidence="2">
    <location>
        <begin position="229"/>
        <end position="253"/>
    </location>
</feature>
<feature type="topological domain" description="Cytoplasmic" evidence="2">
    <location>
        <begin position="254"/>
        <end position="277"/>
    </location>
</feature>
<feature type="transmembrane region" description="Helical; Name=6" evidence="2">
    <location>
        <begin position="278"/>
        <end position="304"/>
    </location>
</feature>
<feature type="topological domain" description="Extracellular" evidence="2">
    <location>
        <begin position="305"/>
        <end position="312"/>
    </location>
</feature>
<feature type="transmembrane region" description="Helical; Name=7" evidence="2">
    <location>
        <begin position="313"/>
        <end position="336"/>
    </location>
</feature>
<feature type="topological domain" description="Cytoplasmic" evidence="2">
    <location>
        <begin position="337"/>
        <end position="398"/>
    </location>
</feature>
<feature type="region of interest" description="Disordered" evidence="6">
    <location>
        <begin position="361"/>
        <end position="385"/>
    </location>
</feature>
<feature type="short sequence motif" description="NPxxY; plays a role in stabilizing the activated conformation of the receptor" evidence="2">
    <location>
        <begin position="332"/>
        <end position="336"/>
    </location>
</feature>
<feature type="modified residue" description="Phosphotyrosine" evidence="30">
    <location>
        <position position="166"/>
    </location>
</feature>
<feature type="modified residue" description="Phosphoserine" evidence="12">
    <location>
        <position position="363"/>
    </location>
</feature>
<feature type="modified residue" description="Phosphothreonine" evidence="12">
    <location>
        <position position="370"/>
    </location>
</feature>
<feature type="modified residue" description="Phosphoserine" evidence="12">
    <location>
        <position position="375"/>
    </location>
</feature>
<feature type="modified residue" description="Phosphothreonine" evidence="45">
    <location>
        <position position="394"/>
    </location>
</feature>
<feature type="lipid moiety-binding region" description="S-palmitoyl cysteine" evidence="4">
    <location>
        <position position="351"/>
    </location>
</feature>
<feature type="glycosylation site" description="N-linked (GlcNAc...) asparagine" evidence="4">
    <location>
        <position position="9"/>
    </location>
</feature>
<feature type="glycosylation site" description="N-linked (GlcNAc...) asparagine" evidence="4">
    <location>
        <position position="31"/>
    </location>
</feature>
<feature type="glycosylation site" description="N-linked (GlcNAc...) asparagine" evidence="4">
    <location>
        <position position="38"/>
    </location>
</feature>
<feature type="glycosylation site" description="N-linked (GlcNAc...) asparagine" evidence="4">
    <location>
        <position position="46"/>
    </location>
</feature>
<feature type="glycosylation site" description="N-linked (GlcNAc...) asparagine" evidence="4">
    <location>
        <position position="53"/>
    </location>
</feature>
<feature type="disulfide bond" evidence="5">
    <location>
        <begin position="140"/>
        <end position="217"/>
    </location>
</feature>
<feature type="splice variant" id="VSP_041828" description="In isoform 2." evidence="41">
    <original>LENLEAETAPLP</original>
    <variation>VCAF</variation>
    <location>
        <begin position="387"/>
        <end position="398"/>
    </location>
</feature>
<feature type="splice variant" id="VSP_041829" description="In isoform 3." evidence="43">
    <original>LENLEAETAPLP</original>
    <variation>GAEL</variation>
    <location>
        <begin position="387"/>
        <end position="398"/>
    </location>
</feature>
<feature type="splice variant" id="VSP_041830" description="In isoform 4." evidence="42">
    <original>LENLEAETAPLP</original>
    <variation>KIVLF</variation>
    <location>
        <begin position="387"/>
        <end position="398"/>
    </location>
</feature>
<feature type="splice variant" id="VSP_041831" description="In isoform 5." evidence="43">
    <original>LENLEAETAPLP</original>
    <variation>EPQSVET</variation>
    <location>
        <begin position="387"/>
        <end position="398"/>
    </location>
</feature>
<feature type="splice variant" id="VSP_041832" description="In isoform 6." evidence="41">
    <original>LENLEAETAPLP</original>
    <variation>PALAVSVAQIFTGYPSPTHGEKPCKSYRDRPRPCGRTWSLKSRAESNVEHFHCGAALIYNNVNFI</variation>
    <location>
        <begin position="387"/>
        <end position="398"/>
    </location>
</feature>
<feature type="splice variant" id="VSP_041833" description="In isoform 7." evidence="41">
    <original>LENLEAETAPLP</original>
    <variation>PALAVSVAQIFTGYPSPTHGEKPCKSYRDRPRPCGRTWSLKSRAESNVEHFHCGAALIYNNELKIGPVSWLQMPAHVLVRPW</variation>
    <location>
        <begin position="387"/>
        <end position="398"/>
    </location>
</feature>
<feature type="splice variant" id="VSP_041834" description="In isoform 8." evidence="41">
    <original>LENLEAETAPLP</original>
    <variation>T</variation>
    <location>
        <begin position="387"/>
        <end position="398"/>
    </location>
</feature>
<feature type="mutagenesis site" description="Abolishes agonist-induced G-protein-independent receptor internalization; when associated with A-96, A-166 and A-336." evidence="7">
    <original>Y</original>
    <variation>A</variation>
    <location>
        <position position="91"/>
    </location>
</feature>
<feature type="mutagenesis site" description="Abolishes agonist-induced G-protein-independent receptor internalization; when associated with A-91, A-166 and A-336." evidence="7">
    <original>Y</original>
    <variation>A</variation>
    <location>
        <position position="96"/>
    </location>
</feature>
<feature type="mutagenesis site" description="Impairs agonist affinity, agonist-induced inhibition of adenylate cyclase and coupling to G-proteins." evidence="34 38">
    <original>D</original>
    <variation>A</variation>
    <variation>N</variation>
    <location>
        <position position="114"/>
    </location>
</feature>
<feature type="mutagenesis site" description="No effect on inhibition of adenylate cyclase." evidence="34 38">
    <original>D</original>
    <variation>E</variation>
    <location>
        <position position="114"/>
    </location>
</feature>
<feature type="mutagenesis site" description="No effect on constitutive activation. Impairs agonist affinity and agonist-induced inhibition of adenylate cyclase." evidence="13 34">
    <original>D</original>
    <variation>A</variation>
    <location>
        <position position="147"/>
    </location>
</feature>
<feature type="mutagenesis site" description="Impairs agonist affinity and increases agonist-induced inhibition of adenylate cyclase." evidence="13 34">
    <original>D</original>
    <variation>E</variation>
    <location>
        <position position="147"/>
    </location>
</feature>
<feature type="mutagenesis site" description="No effect on constitutive activation." evidence="13 34">
    <original>D</original>
    <variation>N</variation>
    <location>
        <position position="147"/>
    </location>
</feature>
<feature type="mutagenesis site" description="Reduces basal activity." evidence="13">
    <original>D</original>
    <variation>E</variation>
    <location>
        <position position="164"/>
    </location>
</feature>
<feature type="mutagenesis site" description="Constitutive active." evidence="13">
    <original>D</original>
    <variation>H</variation>
    <variation>M</variation>
    <variation>Q</variation>
    <variation>Y</variation>
    <location>
        <position position="164"/>
    </location>
</feature>
<feature type="mutagenesis site" description="Abolishes agonist-induced G-protein-independent receptor internalization; when associated with A-91, A-96 and A-336." evidence="7 30">
    <original>Y</original>
    <variation>A</variation>
    <location>
        <position position="166"/>
    </location>
</feature>
<feature type="mutagenesis site" description="Decrease in phosphorylation, no decrease in G-protein binding." evidence="7 30">
    <original>Y</original>
    <variation>F</variation>
    <location>
        <position position="166"/>
    </location>
</feature>
<feature type="mutagenesis site" description="Impairs ARRB2- and GRK3-mediated receptor desensitization." evidence="11">
    <original>T</original>
    <variation>A</variation>
    <location>
        <position position="180"/>
    </location>
</feature>
<feature type="mutagenesis site" description="No effect on constitutive activation. Some constitutive activity; when associated with K-279." evidence="16">
    <original>L</original>
    <variation>E</variation>
    <location>
        <position position="275"/>
    </location>
</feature>
<feature type="mutagenesis site" description="Receptor inactivation." evidence="14 16">
    <original>T</original>
    <variation>D</variation>
    <location>
        <position position="279"/>
    </location>
</feature>
<feature type="mutagenesis site" description="Constitutive active. Some constitutive activity; when associated with E-275." evidence="14 16">
    <original>T</original>
    <variation>K</variation>
    <location>
        <position position="279"/>
    </location>
</feature>
<feature type="mutagenesis site" description="Impairs agonist affinity and increases agonist-induced inhibition of adenylate cyclase." evidence="34">
    <original>H</original>
    <variation>A</variation>
    <location>
        <position position="297"/>
    </location>
</feature>
<feature type="mutagenesis site" description="Abolishes agonist-induced G-protein-independent receptor internalization; when associated with A-91, A-96 and A-166." evidence="7">
    <original>Y</original>
    <variation>A</variation>
    <location>
        <position position="336"/>
    </location>
</feature>
<feature type="mutagenesis site" description="No change in palmitoylation. No change in palmitoylation; when associated with A-351." evidence="40">
    <original>C</original>
    <variation>A</variation>
    <location>
        <position position="346"/>
    </location>
</feature>
<feature type="mutagenesis site" description="No change in palmitoylation; when associated with A-346." evidence="40">
    <original>C</original>
    <variation>A</variation>
    <location>
        <position position="351"/>
    </location>
</feature>
<feature type="mutagenesis site" description="Abolishes basal phosphorylation; when associated with A-370. Abolishes basal and agonist-induced phosphorylation; when associated with A-370 and A-375. Accelerates agonist-induced receptor internalization." evidence="12 28">
    <original>S</original>
    <variation>A</variation>
    <location>
        <position position="363"/>
    </location>
</feature>
<feature type="mutagenesis site" description="Abolishes basal phosphorylation; when associated with A-363. Abolishes basal and agonist-induced phosphorylation; when associated with A-363 and A-375. Accelerates agonist-induced receptor internalization." evidence="12 28">
    <original>T</original>
    <variation>A</variation>
    <location>
        <position position="370"/>
    </location>
</feature>
<feature type="mutagenesis site" description="Reduces agonist-induced receptor internalization. Abolishes morphine-induced phosphorylation. Restores agonist-specific PRKCE activity. Abolishes basal and agonist-induced phosphorylation; when associated with A-363 and A-370." evidence="12 28 31">
    <original>S</original>
    <variation>A</variation>
    <location>
        <position position="375"/>
    </location>
</feature>
<feature type="mutagenesis site" description="Impairs phosphorylation and abolishes agonist-mediated acute receptor desensitization." evidence="7 9">
    <original>T</original>
    <variation>A</variation>
    <location>
        <position position="394"/>
    </location>
</feature>
<feature type="sequence conflict" description="In Ref. 6; AAA79180." evidence="44" ref="6">
    <original>F</original>
    <variation>G</variation>
    <location>
        <position position="237"/>
    </location>
</feature>
<feature type="sequence conflict" description="In Ref. 7; AAQ77386." evidence="44" ref="7">
    <original>I</original>
    <variation>V</variation>
    <location>
        <position position="238"/>
    </location>
</feature>
<feature type="sequence conflict" description="In Ref. 3; AAA41630, 4; AAA70049 and 10; S77863." evidence="44" ref="3 4 10">
    <original>V</original>
    <variation>I</variation>
    <location>
        <position position="245"/>
    </location>
</feature>
<gene>
    <name type="primary">Oprm1</name>
    <name type="synonym">Ror-b</name>
</gene>
<accession>P33535</accession>
<accession>Q2TV20</accession>
<accession>Q2TV21</accession>
<accession>Q4VWM5</accession>
<accession>Q4VWM7</accession>
<accession>Q4VWX7</accession>
<accession>Q4VWX8</accession>
<accession>Q62846</accession>
<accession>Q64064</accession>
<accession>Q64120</accession>
<evidence type="ECO:0000250" key="1">
    <source>
        <dbReference type="UniProtKB" id="P35372"/>
    </source>
</evidence>
<evidence type="ECO:0000250" key="2">
    <source>
        <dbReference type="UniProtKB" id="P42866"/>
    </source>
</evidence>
<evidence type="ECO:0000250" key="3">
    <source>
        <dbReference type="UniProtKB" id="P97266"/>
    </source>
</evidence>
<evidence type="ECO:0000255" key="4"/>
<evidence type="ECO:0000255" key="5">
    <source>
        <dbReference type="PROSITE-ProRule" id="PRU00521"/>
    </source>
</evidence>
<evidence type="ECO:0000256" key="6">
    <source>
        <dbReference type="SAM" id="MobiDB-lite"/>
    </source>
</evidence>
<evidence type="ECO:0000269" key="7">
    <source>
    </source>
</evidence>
<evidence type="ECO:0000269" key="8">
    <source>
    </source>
</evidence>
<evidence type="ECO:0000269" key="9">
    <source>
    </source>
</evidence>
<evidence type="ECO:0000269" key="10">
    <source>
    </source>
</evidence>
<evidence type="ECO:0000269" key="11">
    <source>
    </source>
</evidence>
<evidence type="ECO:0000269" key="12">
    <source>
    </source>
</evidence>
<evidence type="ECO:0000269" key="13">
    <source>
    </source>
</evidence>
<evidence type="ECO:0000269" key="14">
    <source>
    </source>
</evidence>
<evidence type="ECO:0000269" key="15">
    <source>
    </source>
</evidence>
<evidence type="ECO:0000269" key="16">
    <source>
    </source>
</evidence>
<evidence type="ECO:0000269" key="17">
    <source>
    </source>
</evidence>
<evidence type="ECO:0000269" key="18">
    <source>
    </source>
</evidence>
<evidence type="ECO:0000269" key="19">
    <source>
    </source>
</evidence>
<evidence type="ECO:0000269" key="20">
    <source>
    </source>
</evidence>
<evidence type="ECO:0000269" key="21">
    <source>
    </source>
</evidence>
<evidence type="ECO:0000269" key="22">
    <source>
    </source>
</evidence>
<evidence type="ECO:0000269" key="23">
    <source>
    </source>
</evidence>
<evidence type="ECO:0000269" key="24">
    <source>
    </source>
</evidence>
<evidence type="ECO:0000269" key="25">
    <source>
    </source>
</evidence>
<evidence type="ECO:0000269" key="26">
    <source>
    </source>
</evidence>
<evidence type="ECO:0000269" key="27">
    <source>
    </source>
</evidence>
<evidence type="ECO:0000269" key="28">
    <source>
    </source>
</evidence>
<evidence type="ECO:0000269" key="29">
    <source>
    </source>
</evidence>
<evidence type="ECO:0000269" key="30">
    <source>
    </source>
</evidence>
<evidence type="ECO:0000269" key="31">
    <source>
    </source>
</evidence>
<evidence type="ECO:0000269" key="32">
    <source>
    </source>
</evidence>
<evidence type="ECO:0000269" key="33">
    <source>
    </source>
</evidence>
<evidence type="ECO:0000269" key="34">
    <source>
    </source>
</evidence>
<evidence type="ECO:0000269" key="35">
    <source>
    </source>
</evidence>
<evidence type="ECO:0000269" key="36">
    <source>
    </source>
</evidence>
<evidence type="ECO:0000269" key="37">
    <source>
    </source>
</evidence>
<evidence type="ECO:0000269" key="38">
    <source>
    </source>
</evidence>
<evidence type="ECO:0000269" key="39">
    <source>
    </source>
</evidence>
<evidence type="ECO:0000269" key="40">
    <source>
    </source>
</evidence>
<evidence type="ECO:0000303" key="41">
    <source>
    </source>
</evidence>
<evidence type="ECO:0000303" key="42">
    <source>
    </source>
</evidence>
<evidence type="ECO:0000303" key="43">
    <source ref="7"/>
</evidence>
<evidence type="ECO:0000305" key="44"/>
<evidence type="ECO:0000305" key="45">
    <source>
    </source>
</evidence>
<sequence>MDSSTGPGNTSDCSDPLAQASCSPAPGSWLNLSHVDGNQSDPCGLNRTGLGGNDSLCPQTGSPSMVTAITIMALYSIVCVVGLFGNFLVMYVIVRYTKMKTATNIYIFNLALADALATSTLPFQSVNYLMGTWPFGTILCKIVISIDYYNMFTSIFTLCTMSVDRYIAVCHPVKALDFRTPRNAKIVNVCNWILSSAIGLPVMFMATTKYRQGSIDCTLTFSHPTWYWENLLKICVFIFAFIMPVLIITVCYGLMILRLKSVRMLSGSKEKDRNLRRITRMVLVVVAVFIVCWTPIHIYVIIKALITIPETTFQTVSWHFCIALGYTNSCLNPVLYAFLDENFKRCFREFCIPTSSTIEQQNSTRVRQNTREHPSTANTVDRTNHQLENLEAETAPLP</sequence>
<protein>
    <recommendedName>
        <fullName>Mu-type opioid receptor</fullName>
        <shortName>M-OR-1</shortName>
        <shortName>MOR-1</shortName>
    </recommendedName>
    <alternativeName>
        <fullName>Opioid receptor B</fullName>
    </alternativeName>
</protein>
<dbReference type="EMBL" id="D16349">
    <property type="protein sequence ID" value="BAA03852.1"/>
    <property type="molecule type" value="mRNA"/>
</dbReference>
<dbReference type="EMBL" id="L20684">
    <property type="protein sequence ID" value="AAA41643.1"/>
    <property type="molecule type" value="mRNA"/>
</dbReference>
<dbReference type="EMBL" id="L13069">
    <property type="protein sequence ID" value="AAA41630.1"/>
    <property type="molecule type" value="mRNA"/>
</dbReference>
<dbReference type="EMBL" id="U02083">
    <property type="protein sequence ID" value="AAA70049.1"/>
    <property type="molecule type" value="mRNA"/>
</dbReference>
<dbReference type="EMBL" id="L22455">
    <property type="protein sequence ID" value="AAA16075.1"/>
    <property type="molecule type" value="mRNA"/>
</dbReference>
<dbReference type="EMBL" id="U35424">
    <property type="protein sequence ID" value="AAA79180.1"/>
    <property type="molecule type" value="mRNA"/>
</dbReference>
<dbReference type="EMBL" id="AY309003">
    <property type="protein sequence ID" value="AAQ77387.1"/>
    <property type="status" value="ALT_FRAME"/>
    <property type="molecule type" value="mRNA"/>
</dbReference>
<dbReference type="EMBL" id="AY309004">
    <property type="protein sequence ID" value="AAQ77388.1"/>
    <property type="molecule type" value="mRNA"/>
</dbReference>
<dbReference type="EMBL" id="AY225402">
    <property type="protein sequence ID" value="AAP44725.1"/>
    <property type="molecule type" value="mRNA"/>
</dbReference>
<dbReference type="EMBL" id="AY225403">
    <property type="protein sequence ID" value="AAP44726.1"/>
    <property type="molecule type" value="mRNA"/>
</dbReference>
<dbReference type="EMBL" id="AY309000">
    <property type="protein sequence ID" value="AAQ77384.1"/>
    <property type="molecule type" value="mRNA"/>
</dbReference>
<dbReference type="EMBL" id="AY309002">
    <property type="protein sequence ID" value="AAQ77386.1"/>
    <property type="molecule type" value="mRNA"/>
</dbReference>
<dbReference type="EMBL" id="S77863">
    <property type="status" value="NOT_ANNOTATED_CDS"/>
    <property type="molecule type" value="mRNA"/>
</dbReference>
<dbReference type="EMBL" id="S75669">
    <property type="protein sequence ID" value="AAB33530.2"/>
    <property type="molecule type" value="mRNA"/>
</dbReference>
<dbReference type="PIR" id="I56504">
    <property type="entry name" value="I56504"/>
</dbReference>
<dbReference type="PIR" id="I56517">
    <property type="entry name" value="I56517"/>
</dbReference>
<dbReference type="PIR" id="S69010">
    <property type="entry name" value="S69010"/>
</dbReference>
<dbReference type="RefSeq" id="NP_001033686.1">
    <molecule id="P33535-2"/>
    <property type="nucleotide sequence ID" value="NM_001038597.2"/>
</dbReference>
<dbReference type="RefSeq" id="NP_001033688.2">
    <molecule id="P33535-5"/>
    <property type="nucleotide sequence ID" value="NM_001038599.2"/>
</dbReference>
<dbReference type="RefSeq" id="NP_001033689.1">
    <molecule id="P33535-6"/>
    <property type="nucleotide sequence ID" value="NM_001038600.2"/>
</dbReference>
<dbReference type="RefSeq" id="NP_001033690.1">
    <molecule id="P33535-7"/>
    <property type="nucleotide sequence ID" value="NM_001038601.2"/>
</dbReference>
<dbReference type="RefSeq" id="NP_001291664.1">
    <molecule id="P33535-1"/>
    <property type="nucleotide sequence ID" value="NM_001304735.1"/>
</dbReference>
<dbReference type="RefSeq" id="NP_001291666.1">
    <molecule id="P33535-1"/>
    <property type="nucleotide sequence ID" value="NM_001304737.1"/>
</dbReference>
<dbReference type="RefSeq" id="NP_001291667.1">
    <molecule id="P33535-1"/>
    <property type="nucleotide sequence ID" value="NM_001304738.1"/>
</dbReference>
<dbReference type="RefSeq" id="NP_001291669.1">
    <molecule id="P33535-1"/>
    <property type="nucleotide sequence ID" value="NM_001304740.1"/>
</dbReference>
<dbReference type="RefSeq" id="NP_037203.1">
    <molecule id="P33535-1"/>
    <property type="nucleotide sequence ID" value="NM_013071.2"/>
</dbReference>
<dbReference type="SMR" id="P33535"/>
<dbReference type="BioGRID" id="247631">
    <property type="interactions" value="5"/>
</dbReference>
<dbReference type="CORUM" id="P33535"/>
<dbReference type="FunCoup" id="P33535">
    <property type="interactions" value="320"/>
</dbReference>
<dbReference type="IntAct" id="P33535">
    <property type="interactions" value="6"/>
</dbReference>
<dbReference type="STRING" id="10116.ENSRNOP00000068988"/>
<dbReference type="BindingDB" id="P33535"/>
<dbReference type="ChEMBL" id="CHEMBL270"/>
<dbReference type="DrugCentral" id="P33535"/>
<dbReference type="GuidetoPHARMACOLOGY" id="319"/>
<dbReference type="GlyCosmos" id="P33535">
    <property type="glycosylation" value="5 sites, No reported glycans"/>
</dbReference>
<dbReference type="GlyGen" id="P33535">
    <property type="glycosylation" value="5 sites"/>
</dbReference>
<dbReference type="iPTMnet" id="P33535"/>
<dbReference type="PhosphoSitePlus" id="P33535"/>
<dbReference type="SwissPalm" id="P33535"/>
<dbReference type="PaxDb" id="10116-ENSRNOP00000051290"/>
<dbReference type="GeneID" id="25601"/>
<dbReference type="KEGG" id="rno:25601"/>
<dbReference type="AGR" id="RGD:3234"/>
<dbReference type="CTD" id="4988"/>
<dbReference type="RGD" id="3234">
    <property type="gene designation" value="Oprm1"/>
</dbReference>
<dbReference type="VEuPathDB" id="HostDB:ENSRNOG00000018191"/>
<dbReference type="eggNOG" id="KOG3656">
    <property type="taxonomic scope" value="Eukaryota"/>
</dbReference>
<dbReference type="InParanoid" id="P33535"/>
<dbReference type="OrthoDB" id="26498at9989"/>
<dbReference type="TreeFam" id="TF315737"/>
<dbReference type="Reactome" id="R-RNO-111885">
    <property type="pathway name" value="Opioid Signalling"/>
</dbReference>
<dbReference type="Reactome" id="R-RNO-202040">
    <property type="pathway name" value="G-protein activation"/>
</dbReference>
<dbReference type="Reactome" id="R-RNO-375276">
    <property type="pathway name" value="Peptide ligand-binding receptors"/>
</dbReference>
<dbReference type="Reactome" id="R-RNO-418594">
    <property type="pathway name" value="G alpha (i) signalling events"/>
</dbReference>
<dbReference type="PRO" id="PR:P33535"/>
<dbReference type="Proteomes" id="UP000002494">
    <property type="component" value="Chromosome 1"/>
</dbReference>
<dbReference type="Bgee" id="ENSRNOG00000018191">
    <property type="expression patterns" value="Expressed in brain and 3 other cell types or tissues"/>
</dbReference>
<dbReference type="ExpressionAtlas" id="P33535">
    <property type="expression patterns" value="baseline and differential"/>
</dbReference>
<dbReference type="GO" id="GO:0030424">
    <property type="term" value="C:axon"/>
    <property type="evidence" value="ECO:0000250"/>
    <property type="project" value="UniProtKB"/>
</dbReference>
<dbReference type="GO" id="GO:0030425">
    <property type="term" value="C:dendrite"/>
    <property type="evidence" value="ECO:0000314"/>
    <property type="project" value="RGD"/>
</dbReference>
<dbReference type="GO" id="GO:0032839">
    <property type="term" value="C:dendrite cytoplasm"/>
    <property type="evidence" value="ECO:0000314"/>
    <property type="project" value="RGD"/>
</dbReference>
<dbReference type="GO" id="GO:0032590">
    <property type="term" value="C:dendrite membrane"/>
    <property type="evidence" value="ECO:0000314"/>
    <property type="project" value="RGD"/>
</dbReference>
<dbReference type="GO" id="GO:0005768">
    <property type="term" value="C:endosome"/>
    <property type="evidence" value="ECO:0000250"/>
    <property type="project" value="UniProtKB"/>
</dbReference>
<dbReference type="GO" id="GO:0005925">
    <property type="term" value="C:focal adhesion"/>
    <property type="evidence" value="ECO:0000314"/>
    <property type="project" value="RGD"/>
</dbReference>
<dbReference type="GO" id="GO:0098982">
    <property type="term" value="C:GABA-ergic synapse"/>
    <property type="evidence" value="ECO:0000266"/>
    <property type="project" value="RGD"/>
</dbReference>
<dbReference type="GO" id="GO:0016020">
    <property type="term" value="C:membrane"/>
    <property type="evidence" value="ECO:0000266"/>
    <property type="project" value="RGD"/>
</dbReference>
<dbReference type="GO" id="GO:0005739">
    <property type="term" value="C:mitochondrion"/>
    <property type="evidence" value="ECO:0000314"/>
    <property type="project" value="RGD"/>
</dbReference>
<dbReference type="GO" id="GO:0043005">
    <property type="term" value="C:neuron projection"/>
    <property type="evidence" value="ECO:0000318"/>
    <property type="project" value="GO_Central"/>
</dbReference>
<dbReference type="GO" id="GO:0043204">
    <property type="term" value="C:perikaryon"/>
    <property type="evidence" value="ECO:0000314"/>
    <property type="project" value="RGD"/>
</dbReference>
<dbReference type="GO" id="GO:0005886">
    <property type="term" value="C:plasma membrane"/>
    <property type="evidence" value="ECO:0000318"/>
    <property type="project" value="GO_Central"/>
</dbReference>
<dbReference type="GO" id="GO:0045211">
    <property type="term" value="C:postsynaptic membrane"/>
    <property type="evidence" value="ECO:0000314"/>
    <property type="project" value="SynGO"/>
</dbReference>
<dbReference type="GO" id="GO:0042734">
    <property type="term" value="C:presynaptic membrane"/>
    <property type="evidence" value="ECO:0000314"/>
    <property type="project" value="SynGO"/>
</dbReference>
<dbReference type="GO" id="GO:0042383">
    <property type="term" value="C:sarcolemma"/>
    <property type="evidence" value="ECO:0000314"/>
    <property type="project" value="RGD"/>
</dbReference>
<dbReference type="GO" id="GO:0016529">
    <property type="term" value="C:sarcoplasmic reticulum"/>
    <property type="evidence" value="ECO:0000314"/>
    <property type="project" value="RGD"/>
</dbReference>
<dbReference type="GO" id="GO:0097444">
    <property type="term" value="C:spine apparatus"/>
    <property type="evidence" value="ECO:0000314"/>
    <property type="project" value="SynGO"/>
</dbReference>
<dbReference type="GO" id="GO:0030315">
    <property type="term" value="C:T-tubule"/>
    <property type="evidence" value="ECO:0000314"/>
    <property type="project" value="RGD"/>
</dbReference>
<dbReference type="GO" id="GO:0004979">
    <property type="term" value="F:beta-endorphin receptor activity"/>
    <property type="evidence" value="ECO:0000266"/>
    <property type="project" value="RGD"/>
</dbReference>
<dbReference type="GO" id="GO:0004985">
    <property type="term" value="F:G protein-coupled opioid receptor activity"/>
    <property type="evidence" value="ECO:0000266"/>
    <property type="project" value="RGD"/>
</dbReference>
<dbReference type="GO" id="GO:0004930">
    <property type="term" value="F:G protein-coupled receptor activity"/>
    <property type="evidence" value="ECO:0000314"/>
    <property type="project" value="RGD"/>
</dbReference>
<dbReference type="GO" id="GO:0001965">
    <property type="term" value="F:G-protein alpha-subunit binding"/>
    <property type="evidence" value="ECO:0000250"/>
    <property type="project" value="UniProtKB"/>
</dbReference>
<dbReference type="GO" id="GO:0031681">
    <property type="term" value="F:G-protein beta-subunit binding"/>
    <property type="evidence" value="ECO:0000353"/>
    <property type="project" value="RGD"/>
</dbReference>
<dbReference type="GO" id="GO:0038047">
    <property type="term" value="F:morphine receptor activity"/>
    <property type="evidence" value="ECO:0000314"/>
    <property type="project" value="RGD"/>
</dbReference>
<dbReference type="GO" id="GO:0042923">
    <property type="term" value="F:neuropeptide binding"/>
    <property type="evidence" value="ECO:0000318"/>
    <property type="project" value="GO_Central"/>
</dbReference>
<dbReference type="GO" id="GO:0019904">
    <property type="term" value="F:protein domain specific binding"/>
    <property type="evidence" value="ECO:0000353"/>
    <property type="project" value="RGD"/>
</dbReference>
<dbReference type="GO" id="GO:0005245">
    <property type="term" value="F:voltage-gated calcium channel activity"/>
    <property type="evidence" value="ECO:0000315"/>
    <property type="project" value="UniProtKB"/>
</dbReference>
<dbReference type="GO" id="GO:0002438">
    <property type="term" value="P:acute inflammatory response to antigenic stimulus"/>
    <property type="evidence" value="ECO:0000270"/>
    <property type="project" value="RGD"/>
</dbReference>
<dbReference type="GO" id="GO:0007191">
    <property type="term" value="P:adenylate cyclase-activating dopamine receptor signaling pathway"/>
    <property type="evidence" value="ECO:0000266"/>
    <property type="project" value="RGD"/>
</dbReference>
<dbReference type="GO" id="GO:0007197">
    <property type="term" value="P:adenylate cyclase-inhibiting G protein-coupled acetylcholine receptor signaling pathway"/>
    <property type="evidence" value="ECO:0000314"/>
    <property type="project" value="GO_Central"/>
</dbReference>
<dbReference type="GO" id="GO:0007193">
    <property type="term" value="P:adenylate cyclase-inhibiting G protein-coupled receptor signaling pathway"/>
    <property type="evidence" value="ECO:0000314"/>
    <property type="project" value="RGD"/>
</dbReference>
<dbReference type="GO" id="GO:0031635">
    <property type="term" value="P:adenylate cyclase-inhibiting opioid receptor signaling pathway"/>
    <property type="evidence" value="ECO:0000314"/>
    <property type="project" value="RGD"/>
</dbReference>
<dbReference type="GO" id="GO:0048149">
    <property type="term" value="P:behavioral response to ethanol"/>
    <property type="evidence" value="ECO:0000266"/>
    <property type="project" value="RGD"/>
</dbReference>
<dbReference type="GO" id="GO:0042755">
    <property type="term" value="P:eating behavior"/>
    <property type="evidence" value="ECO:0000315"/>
    <property type="project" value="RGD"/>
</dbReference>
<dbReference type="GO" id="GO:0044849">
    <property type="term" value="P:estrous cycle"/>
    <property type="evidence" value="ECO:0000270"/>
    <property type="project" value="RGD"/>
</dbReference>
<dbReference type="GO" id="GO:0060079">
    <property type="term" value="P:excitatory postsynaptic potential"/>
    <property type="evidence" value="ECO:0000314"/>
    <property type="project" value="RGD"/>
</dbReference>
<dbReference type="GO" id="GO:0038003">
    <property type="term" value="P:G protein-coupled opioid receptor signaling pathway"/>
    <property type="evidence" value="ECO:0000266"/>
    <property type="project" value="RGD"/>
</dbReference>
<dbReference type="GO" id="GO:0007186">
    <property type="term" value="P:G protein-coupled receptor signaling pathway"/>
    <property type="evidence" value="ECO:0000314"/>
    <property type="project" value="RGD"/>
</dbReference>
<dbReference type="GO" id="GO:0006955">
    <property type="term" value="P:immune response"/>
    <property type="evidence" value="ECO:0000304"/>
    <property type="project" value="RGD"/>
</dbReference>
<dbReference type="GO" id="GO:0007626">
    <property type="term" value="P:locomotory behavior"/>
    <property type="evidence" value="ECO:0000266"/>
    <property type="project" value="RGD"/>
</dbReference>
<dbReference type="GO" id="GO:0106072">
    <property type="term" value="P:negative regulation of adenylate cyclase-activating G protein-coupled receptor signaling pathway"/>
    <property type="evidence" value="ECO:0000314"/>
    <property type="project" value="RGD"/>
</dbReference>
<dbReference type="GO" id="GO:0051481">
    <property type="term" value="P:negative regulation of cytosolic calcium ion concentration"/>
    <property type="evidence" value="ECO:0000250"/>
    <property type="project" value="UniProtKB"/>
</dbReference>
<dbReference type="GO" id="GO:0033685">
    <property type="term" value="P:negative regulation of luteinizing hormone secretion"/>
    <property type="evidence" value="ECO:0000315"/>
    <property type="project" value="RGD"/>
</dbReference>
<dbReference type="GO" id="GO:0045019">
    <property type="term" value="P:negative regulation of nitric oxide biosynthetic process"/>
    <property type="evidence" value="ECO:0000250"/>
    <property type="project" value="UniProtKB"/>
</dbReference>
<dbReference type="GO" id="GO:0061358">
    <property type="term" value="P:negative regulation of Wnt protein secretion"/>
    <property type="evidence" value="ECO:0000250"/>
    <property type="project" value="UniProtKB"/>
</dbReference>
<dbReference type="GO" id="GO:0007218">
    <property type="term" value="P:neuropeptide signaling pathway"/>
    <property type="evidence" value="ECO:0000318"/>
    <property type="project" value="GO_Central"/>
</dbReference>
<dbReference type="GO" id="GO:0007200">
    <property type="term" value="P:phospholipase C-activating G protein-coupled receptor signaling pathway"/>
    <property type="evidence" value="ECO:0000314"/>
    <property type="project" value="UniProtKB"/>
</dbReference>
<dbReference type="GO" id="GO:0032100">
    <property type="term" value="P:positive regulation of appetite"/>
    <property type="evidence" value="ECO:0000315"/>
    <property type="project" value="RGD"/>
</dbReference>
<dbReference type="GO" id="GO:0070374">
    <property type="term" value="P:positive regulation of ERK1 and ERK2 cascade"/>
    <property type="evidence" value="ECO:0000314"/>
    <property type="project" value="UniProtKB"/>
</dbReference>
<dbReference type="GO" id="GO:0045722">
    <property type="term" value="P:positive regulation of gluconeogenesis"/>
    <property type="evidence" value="ECO:0000315"/>
    <property type="project" value="RGD"/>
</dbReference>
<dbReference type="GO" id="GO:0050769">
    <property type="term" value="P:positive regulation of neurogenesis"/>
    <property type="evidence" value="ECO:0000250"/>
    <property type="project" value="UniProtKB"/>
</dbReference>
<dbReference type="GO" id="GO:0099171">
    <property type="term" value="P:presynaptic modulation of chemical synaptic transmission"/>
    <property type="evidence" value="ECO:0000266"/>
    <property type="project" value="RGD"/>
</dbReference>
<dbReference type="GO" id="GO:0080135">
    <property type="term" value="P:regulation of cellular response to stress"/>
    <property type="evidence" value="ECO:0000266"/>
    <property type="project" value="RGD"/>
</dbReference>
<dbReference type="GO" id="GO:2000310">
    <property type="term" value="P:regulation of NMDA receptor activity"/>
    <property type="evidence" value="ECO:0000315"/>
    <property type="project" value="UniProtKB"/>
</dbReference>
<dbReference type="GO" id="GO:0042220">
    <property type="term" value="P:response to cocaine"/>
    <property type="evidence" value="ECO:0000270"/>
    <property type="project" value="RGD"/>
</dbReference>
<dbReference type="GO" id="GO:0045471">
    <property type="term" value="P:response to ethanol"/>
    <property type="evidence" value="ECO:0000314"/>
    <property type="project" value="RGD"/>
</dbReference>
<dbReference type="GO" id="GO:0032094">
    <property type="term" value="P:response to food"/>
    <property type="evidence" value="ECO:0000270"/>
    <property type="project" value="RGD"/>
</dbReference>
<dbReference type="GO" id="GO:0070848">
    <property type="term" value="P:response to growth factor"/>
    <property type="evidence" value="ECO:0000270"/>
    <property type="project" value="RGD"/>
</dbReference>
<dbReference type="GO" id="GO:0032496">
    <property type="term" value="P:response to lipopolysaccharide"/>
    <property type="evidence" value="ECO:0000270"/>
    <property type="project" value="RGD"/>
</dbReference>
<dbReference type="GO" id="GO:0019233">
    <property type="term" value="P:sensory perception of pain"/>
    <property type="evidence" value="ECO:0000250"/>
    <property type="project" value="UniProtKB"/>
</dbReference>
<dbReference type="GO" id="GO:0035176">
    <property type="term" value="P:social behavior"/>
    <property type="evidence" value="ECO:0000315"/>
    <property type="project" value="RGD"/>
</dbReference>
<dbReference type="GO" id="GO:0042713">
    <property type="term" value="P:sperm ejaculation"/>
    <property type="evidence" value="ECO:0000314"/>
    <property type="project" value="RGD"/>
</dbReference>
<dbReference type="GO" id="GO:0019226">
    <property type="term" value="P:transmission of nerve impulse"/>
    <property type="evidence" value="ECO:0000266"/>
    <property type="project" value="RGD"/>
</dbReference>
<dbReference type="CDD" id="cd15090">
    <property type="entry name" value="7tmA_Mu_opioid_R"/>
    <property type="match status" value="1"/>
</dbReference>
<dbReference type="FunFam" id="1.20.1070.10:FF:000014">
    <property type="entry name" value="Kappa-type opioid receptor 1"/>
    <property type="match status" value="1"/>
</dbReference>
<dbReference type="Gene3D" id="1.20.1070.10">
    <property type="entry name" value="Rhodopsin 7-helix transmembrane proteins"/>
    <property type="match status" value="1"/>
</dbReference>
<dbReference type="InterPro" id="IPR000276">
    <property type="entry name" value="GPCR_Rhodpsn"/>
</dbReference>
<dbReference type="InterPro" id="IPR017452">
    <property type="entry name" value="GPCR_Rhodpsn_7TM"/>
</dbReference>
<dbReference type="InterPro" id="IPR000105">
    <property type="entry name" value="Mu_opioid_rcpt"/>
</dbReference>
<dbReference type="InterPro" id="IPR001418">
    <property type="entry name" value="Opioid_rcpt"/>
</dbReference>
<dbReference type="PANTHER" id="PTHR24229:SF7">
    <property type="entry name" value="MU-TYPE OPIOID RECEPTOR"/>
    <property type="match status" value="1"/>
</dbReference>
<dbReference type="PANTHER" id="PTHR24229">
    <property type="entry name" value="NEUROPEPTIDES RECEPTOR"/>
    <property type="match status" value="1"/>
</dbReference>
<dbReference type="Pfam" id="PF00001">
    <property type="entry name" value="7tm_1"/>
    <property type="match status" value="1"/>
</dbReference>
<dbReference type="PRINTS" id="PR00237">
    <property type="entry name" value="GPCRRHODOPSN"/>
</dbReference>
<dbReference type="PRINTS" id="PR00537">
    <property type="entry name" value="MUOPIOIDR"/>
</dbReference>
<dbReference type="PRINTS" id="PR00384">
    <property type="entry name" value="OPIOIDR"/>
</dbReference>
<dbReference type="SUPFAM" id="SSF81321">
    <property type="entry name" value="Family A G protein-coupled receptor-like"/>
    <property type="match status" value="1"/>
</dbReference>
<dbReference type="PROSITE" id="PS00237">
    <property type="entry name" value="G_PROTEIN_RECEP_F1_1"/>
    <property type="match status" value="1"/>
</dbReference>
<dbReference type="PROSITE" id="PS50262">
    <property type="entry name" value="G_PROTEIN_RECEP_F1_2"/>
    <property type="match status" value="1"/>
</dbReference>
<reference key="1">
    <citation type="journal article" date="1993" name="FEBS Lett.">
        <title>Primary structures and expression from cDNAs of rat opioid receptor delta- and mu-subtypes.</title>
        <authorList>
            <person name="Fukuda K."/>
            <person name="Kato S."/>
            <person name="Mori K."/>
            <person name="Nishi M."/>
            <person name="Takeshima H."/>
        </authorList>
    </citation>
    <scope>NUCLEOTIDE SEQUENCE [MRNA] (ISOFORM 1)</scope>
    <source>
        <tissue>Brain</tissue>
    </source>
</reference>
<reference key="2">
    <citation type="journal article" date="1993" name="Proc. Natl. Acad. Sci. U.S.A.">
        <title>Mu opiate receptor: cDNA cloning and expression.</title>
        <authorList>
            <person name="Wang J.-B."/>
            <person name="Imai Y."/>
            <person name="Epler M.C."/>
            <person name="Gregor P."/>
            <person name="Spivak C."/>
            <person name="Uhl G.R."/>
        </authorList>
    </citation>
    <scope>NUCLEOTIDE SEQUENCE [MRNA] (ISOFORM 1)</scope>
    <source>
        <tissue>Brain</tissue>
    </source>
</reference>
<reference key="3">
    <citation type="journal article" date="1993" name="Mol. Pharmacol.">
        <title>Molecular cloning and functional expression of a mu-opioid receptor from rat brain.</title>
        <authorList>
            <person name="Chen Y."/>
            <person name="Mestek A."/>
            <person name="Liu J."/>
            <person name="Hurley J.A."/>
            <person name="Yu L."/>
        </authorList>
    </citation>
    <scope>NUCLEOTIDE SEQUENCE [MRNA] (ISOFORM 1)</scope>
    <scope>FUNCTION</scope>
    <scope>SUBCELLULAR LOCATION</scope>
    <source>
        <tissue>Brain</tissue>
    </source>
</reference>
<reference key="4">
    <citation type="submission" date="1993-09" db="EMBL/GenBank/DDBJ databases">
        <authorList>
            <person name="Bunzow J.R."/>
            <person name="Grandy D.K."/>
            <person name="Kelly M."/>
        </authorList>
    </citation>
    <scope>NUCLEOTIDE SEQUENCE [MRNA] (ISOFORM 1)</scope>
    <source>
        <strain>Sprague-Dawley</strain>
        <tissue>Brain</tissue>
    </source>
</reference>
<reference key="5">
    <citation type="journal article" date="1993" name="Neuron">
        <title>Cloning and pharmacological characterization of a rat mu opioid receptor.</title>
        <authorList>
            <person name="Thompson R.C."/>
            <person name="Mansour A."/>
            <person name="Akil H."/>
            <person name="Watson S.J."/>
        </authorList>
    </citation>
    <scope>NUCLEOTIDE SEQUENCE [MRNA] (ISOFORM 1)</scope>
    <scope>FUNCTION</scope>
    <scope>SUBCELLULAR LOCATION</scope>
    <source>
        <strain>Sprague-Dawley</strain>
        <tissue>Olfactory bulb</tissue>
    </source>
</reference>
<reference key="6">
    <citation type="journal article" date="1994" name="J. Neurochem.">
        <title>Cloning, characterization, and distribution of a mu-opioid receptor in rat brain.</title>
        <authorList>
            <person name="Zastawny R.L."/>
            <person name="George S.R."/>
            <person name="Nguyen T."/>
            <person name="Cheng R."/>
            <person name="Tsatsos J."/>
            <person name="Briones-Urbina R."/>
            <person name="O'Dowd B.F."/>
        </authorList>
    </citation>
    <scope>NUCLEOTIDE SEQUENCE [MRNA] (ISOFORM 1)</scope>
    <source>
        <tissue>Brain</tissue>
    </source>
</reference>
<reference key="7">
    <citation type="submission" date="2003-05" db="EMBL/GenBank/DDBJ databases">
        <title>Identification and characterization of two new alternatively spliced variants from the rat mu opioid receptor gene, Oprm.</title>
        <authorList>
            <person name="Pan Y.-X."/>
            <person name="Xu J."/>
            <person name="Pasternak G.W."/>
        </authorList>
    </citation>
    <scope>NUCLEOTIDE SEQUENCE [MRNA] (ISOFORMS 3 AND 5)</scope>
    <source>
        <strain>Sprague-Dawley</strain>
    </source>
</reference>
<reference key="8">
    <citation type="journal article" date="2004" name="J. Neurochem.">
        <title>Identification of three new alternatively spliced variants of the rat mu opioid receptor gene: dissociation of affinity and efficacy.</title>
        <authorList>
            <person name="Pasternak D.A."/>
            <person name="Pan L."/>
            <person name="Xu J."/>
            <person name="Yu R."/>
            <person name="Xu M.M."/>
            <person name="Pasternak G.W."/>
            <person name="Pan Y.X."/>
        </authorList>
    </citation>
    <scope>NUCLEOTIDE SEQUENCE [MRNA] (ISOFORMS 2; 6; 7 AND 8)</scope>
    <source>
        <strain>Sprague-Dawley</strain>
    </source>
</reference>
<reference key="9">
    <citation type="journal article" date="2004" name="Nature">
        <title>Genome sequence of the Brown Norway rat yields insights into mammalian evolution.</title>
        <authorList>
            <person name="Gibbs R.A."/>
            <person name="Weinstock G.M."/>
            <person name="Metzker M.L."/>
            <person name="Muzny D.M."/>
            <person name="Sodergren E.J."/>
            <person name="Scherer S."/>
            <person name="Scott G."/>
            <person name="Steffen D."/>
            <person name="Worley K.C."/>
            <person name="Burch P.E."/>
            <person name="Okwuonu G."/>
            <person name="Hines S."/>
            <person name="Lewis L."/>
            <person name="Deramo C."/>
            <person name="Delgado O."/>
            <person name="Dugan-Rocha S."/>
            <person name="Miner G."/>
            <person name="Morgan M."/>
            <person name="Hawes A."/>
            <person name="Gill R."/>
            <person name="Holt R.A."/>
            <person name="Adams M.D."/>
            <person name="Amanatides P.G."/>
            <person name="Baden-Tillson H."/>
            <person name="Barnstead M."/>
            <person name="Chin S."/>
            <person name="Evans C.A."/>
            <person name="Ferriera S."/>
            <person name="Fosler C."/>
            <person name="Glodek A."/>
            <person name="Gu Z."/>
            <person name="Jennings D."/>
            <person name="Kraft C.L."/>
            <person name="Nguyen T."/>
            <person name="Pfannkoch C.M."/>
            <person name="Sitter C."/>
            <person name="Sutton G.G."/>
            <person name="Venter J.C."/>
            <person name="Woodage T."/>
            <person name="Smith D."/>
            <person name="Lee H.-M."/>
            <person name="Gustafson E."/>
            <person name="Cahill P."/>
            <person name="Kana A."/>
            <person name="Doucette-Stamm L."/>
            <person name="Weinstock K."/>
            <person name="Fechtel K."/>
            <person name="Weiss R.B."/>
            <person name="Dunn D.M."/>
            <person name="Green E.D."/>
            <person name="Blakesley R.W."/>
            <person name="Bouffard G.G."/>
            <person name="De Jong P.J."/>
            <person name="Osoegawa K."/>
            <person name="Zhu B."/>
            <person name="Marra M."/>
            <person name="Schein J."/>
            <person name="Bosdet I."/>
            <person name="Fjell C."/>
            <person name="Jones S."/>
            <person name="Krzywinski M."/>
            <person name="Mathewson C."/>
            <person name="Siddiqui A."/>
            <person name="Wye N."/>
            <person name="McPherson J."/>
            <person name="Zhao S."/>
            <person name="Fraser C.M."/>
            <person name="Shetty J."/>
            <person name="Shatsman S."/>
            <person name="Geer K."/>
            <person name="Chen Y."/>
            <person name="Abramzon S."/>
            <person name="Nierman W.C."/>
            <person name="Havlak P.H."/>
            <person name="Chen R."/>
            <person name="Durbin K.J."/>
            <person name="Egan A."/>
            <person name="Ren Y."/>
            <person name="Song X.-Z."/>
            <person name="Li B."/>
            <person name="Liu Y."/>
            <person name="Qin X."/>
            <person name="Cawley S."/>
            <person name="Cooney A.J."/>
            <person name="D'Souza L.M."/>
            <person name="Martin K."/>
            <person name="Wu J.Q."/>
            <person name="Gonzalez-Garay M.L."/>
            <person name="Jackson A.R."/>
            <person name="Kalafus K.J."/>
            <person name="McLeod M.P."/>
            <person name="Milosavljevic A."/>
            <person name="Virk D."/>
            <person name="Volkov A."/>
            <person name="Wheeler D.A."/>
            <person name="Zhang Z."/>
            <person name="Bailey J.A."/>
            <person name="Eichler E.E."/>
            <person name="Tuzun E."/>
            <person name="Birney E."/>
            <person name="Mongin E."/>
            <person name="Ureta-Vidal A."/>
            <person name="Woodwark C."/>
            <person name="Zdobnov E."/>
            <person name="Bork P."/>
            <person name="Suyama M."/>
            <person name="Torrents D."/>
            <person name="Alexandersson M."/>
            <person name="Trask B.J."/>
            <person name="Young J.M."/>
            <person name="Huang H."/>
            <person name="Wang H."/>
            <person name="Xing H."/>
            <person name="Daniels S."/>
            <person name="Gietzen D."/>
            <person name="Schmidt J."/>
            <person name="Stevens K."/>
            <person name="Vitt U."/>
            <person name="Wingrove J."/>
            <person name="Camara F."/>
            <person name="Mar Alba M."/>
            <person name="Abril J.F."/>
            <person name="Guigo R."/>
            <person name="Smit A."/>
            <person name="Dubchak I."/>
            <person name="Rubin E.M."/>
            <person name="Couronne O."/>
            <person name="Poliakov A."/>
            <person name="Huebner N."/>
            <person name="Ganten D."/>
            <person name="Goesele C."/>
            <person name="Hummel O."/>
            <person name="Kreitler T."/>
            <person name="Lee Y.-A."/>
            <person name="Monti J."/>
            <person name="Schulz H."/>
            <person name="Zimdahl H."/>
            <person name="Himmelbauer H."/>
            <person name="Lehrach H."/>
            <person name="Jacob H.J."/>
            <person name="Bromberg S."/>
            <person name="Gullings-Handley J."/>
            <person name="Jensen-Seaman M.I."/>
            <person name="Kwitek A.E."/>
            <person name="Lazar J."/>
            <person name="Pasko D."/>
            <person name="Tonellato P.J."/>
            <person name="Twigger S."/>
            <person name="Ponting C.P."/>
            <person name="Duarte J.M."/>
            <person name="Rice S."/>
            <person name="Goodstadt L."/>
            <person name="Beatson S.A."/>
            <person name="Emes R.D."/>
            <person name="Winter E.E."/>
            <person name="Webber C."/>
            <person name="Brandt P."/>
            <person name="Nyakatura G."/>
            <person name="Adetobi M."/>
            <person name="Chiaromonte F."/>
            <person name="Elnitski L."/>
            <person name="Eswara P."/>
            <person name="Hardison R.C."/>
            <person name="Hou M."/>
            <person name="Kolbe D."/>
            <person name="Makova K."/>
            <person name="Miller W."/>
            <person name="Nekrutenko A."/>
            <person name="Riemer C."/>
            <person name="Schwartz S."/>
            <person name="Taylor J."/>
            <person name="Yang S."/>
            <person name="Zhang Y."/>
            <person name="Lindpaintner K."/>
            <person name="Andrews T.D."/>
            <person name="Caccamo M."/>
            <person name="Clamp M."/>
            <person name="Clarke L."/>
            <person name="Curwen V."/>
            <person name="Durbin R.M."/>
            <person name="Eyras E."/>
            <person name="Searle S.M."/>
            <person name="Cooper G.M."/>
            <person name="Batzoglou S."/>
            <person name="Brudno M."/>
            <person name="Sidow A."/>
            <person name="Stone E.A."/>
            <person name="Payseur B.A."/>
            <person name="Bourque G."/>
            <person name="Lopez-Otin C."/>
            <person name="Puente X.S."/>
            <person name="Chakrabarti K."/>
            <person name="Chatterji S."/>
            <person name="Dewey C."/>
            <person name="Pachter L."/>
            <person name="Bray N."/>
            <person name="Yap V.B."/>
            <person name="Caspi A."/>
            <person name="Tesler G."/>
            <person name="Pevzner P.A."/>
            <person name="Haussler D."/>
            <person name="Roskin K.M."/>
            <person name="Baertsch R."/>
            <person name="Clawson H."/>
            <person name="Furey T.S."/>
            <person name="Hinrichs A.S."/>
            <person name="Karolchik D."/>
            <person name="Kent W.J."/>
            <person name="Rosenbloom K.R."/>
            <person name="Trumbower H."/>
            <person name="Weirauch M."/>
            <person name="Cooper D.N."/>
            <person name="Stenson P.D."/>
            <person name="Ma B."/>
            <person name="Brent M."/>
            <person name="Arumugam M."/>
            <person name="Shteynberg D."/>
            <person name="Copley R.R."/>
            <person name="Taylor M.S."/>
            <person name="Riethman H."/>
            <person name="Mudunuri U."/>
            <person name="Peterson J."/>
            <person name="Guyer M."/>
            <person name="Felsenfeld A."/>
            <person name="Old S."/>
            <person name="Mockrin S."/>
            <person name="Collins F.S."/>
        </authorList>
    </citation>
    <scope>NUCLEOTIDE SEQUENCE [LARGE SCALE GENOMIC DNA]</scope>
    <source>
        <strain>Brown Norway</strain>
    </source>
</reference>
<reference key="10">
    <citation type="journal article" date="1995" name="Biochem. Biophys. Res. Commun.">
        <title>Complementary DNA cloning of a mu-opioid receptor from rat peritoneal macrophages.</title>
        <authorList>
            <person name="Sedqi M."/>
            <person name="Roy S."/>
            <person name="Ramakrishnan S."/>
            <person name="Elde R."/>
            <person name="Loh H.H."/>
        </authorList>
    </citation>
    <scope>NUCLEOTIDE SEQUENCE [MRNA] OF 101-340</scope>
    <source>
        <tissue>Macrophage</tissue>
    </source>
</reference>
<reference key="11">
    <citation type="journal article" date="1995" name="FEBS Lett.">
        <title>Cloning and expression of an isoform of the rat mu opioid receptor (rMOR1B) which differs in agonist induced desensitization from rMOR1.</title>
        <authorList>
            <person name="Zimprich A."/>
            <person name="Simon T."/>
            <person name="Hoellt V."/>
        </authorList>
    </citation>
    <scope>NUCLEOTIDE SEQUENCE [MRNA] OF 356-398 (ISOFORM 4)</scope>
</reference>
<reference key="12">
    <citation type="journal article" date="1991" name="Neuron">
        <title>Activation of mu opioid receptors inhibits transient high- and low-threshold Ca2+ currents, but spares a sustained current.</title>
        <authorList>
            <person name="Schroeder J.E."/>
            <person name="Fischbach P.S."/>
            <person name="Zheng D."/>
            <person name="McCleskey E.W."/>
        </authorList>
    </citation>
    <scope>FUNCTION</scope>
</reference>
<reference key="13">
    <citation type="journal article" date="1993" name="J. Neurosci.">
        <title>Inhibition of Ca2+ currents by a mu-opioid in a defined subset of rat sensory neurons.</title>
        <authorList>
            <person name="Schroeder J.E."/>
            <person name="McCleskey E.W."/>
        </authorList>
    </citation>
    <scope>FUNCTION</scope>
</reference>
<reference key="14">
    <citation type="journal article" date="1994" name="J. Biol. Chem.">
        <title>-mu opiate receptor. Charged transmembrane domain amino acids are critical for agonist recognition and intrinsic activity.</title>
        <authorList>
            <person name="Surratt C.K."/>
            <person name="Johnson P.S."/>
            <person name="Moriwaki A."/>
            <person name="Seidleck B.K."/>
            <person name="Blaschak C.J."/>
            <person name="Wang J.B."/>
            <person name="Uhl G.R."/>
        </authorList>
    </citation>
    <scope>FUNCTION</scope>
    <scope>MUTAGENESIS OF ASP-114; ASP-147 AND HIS-297</scope>
</reference>
<reference key="15">
    <citation type="journal article" date="1995" name="Brain Res.">
        <title>The cloned mu, delta and kappa receptors and their endogenous ligands: evidence for two opioid peptide recognition cores.</title>
        <authorList>
            <person name="Mansour A."/>
            <person name="Hoversten M.T."/>
            <person name="Taylor L.P."/>
            <person name="Watson S.J."/>
            <person name="Akil H."/>
        </authorList>
    </citation>
    <scope>FUNCTION</scope>
</reference>
<reference key="16">
    <citation type="journal article" date="1995" name="J. Neurochem.">
        <title>Activation of type II adenylyl cyclase by the cloned mu-opioid receptor: coupling to multiple G proteins.</title>
        <authorList>
            <person name="Chan J.S."/>
            <person name="Chiu T.T."/>
            <person name="Wong Y.H."/>
        </authorList>
    </citation>
    <scope>FUNCTION</scope>
    <scope>COUPLING TO G-PROTEINS</scope>
</reference>
<reference key="17">
    <citation type="journal article" date="1997" name="Mol. Pharmacol.">
        <title>The mu-opioid receptor down-regulates differently from the delta-opioid receptor: requirement of a high affinity receptor/G protein complex formation.</title>
        <authorList>
            <person name="Chakrabarti S."/>
            <person name="Yang W."/>
            <person name="Law P.Y."/>
            <person name="Loh H.H."/>
        </authorList>
    </citation>
    <scope>FUNCTION</scope>
    <scope>MUTAGENESIS OF ASP-114</scope>
</reference>
<reference key="18">
    <citation type="journal article" date="1998" name="FEBS Lett.">
        <title>Palmitoylation of the rat mu opioid receptor.</title>
        <authorList>
            <person name="Chen C."/>
            <person name="Shahabi V."/>
            <person name="Xu W."/>
            <person name="Liu-Chen L.Y."/>
        </authorList>
    </citation>
    <scope>PALMITOYLATION</scope>
    <scope>MUTAGENESIS OF CYS-346 AND CYS-351</scope>
</reference>
<reference key="19">
    <citation type="journal article" date="1998" name="J. Neurochem.">
        <title>Differential coupling of mu-, delta-, and kappa-opioid receptors to G alpha16-mediated stimulation of phospholipase C.</title>
        <authorList>
            <person name="Lee J.W."/>
            <person name="Joshi S."/>
            <person name="Chan J.S."/>
            <person name="Wong Y.H."/>
        </authorList>
    </citation>
    <scope>COUPLING TO GNA15</scope>
    <scope>FUNCTION</scope>
</reference>
<reference key="20">
    <citation type="journal article" date="1999" name="J. Biol. Chem.">
        <title>Agonist-induced, G protein-dependent and -independent down-regulation of the mu opioid receptor. The receptor is a direct substrate for protein-tyrosine kinase.</title>
        <authorList>
            <person name="Pak Y."/>
            <person name="O'Dowd B.F."/>
            <person name="Wang J.B."/>
            <person name="George S.R."/>
        </authorList>
    </citation>
    <scope>PHOSPHORYLATION</scope>
    <scope>MUTAGENESIS OF TYR-91; TYR-96; TYR-166; TYR-336 AND THR-394</scope>
</reference>
<reference key="21">
    <citation type="journal article" date="2000" name="Biochemistry">
        <title>Role for the C-terminus in agonist-induced mu opioid receptor phosphorylation and desensitization.</title>
        <authorList>
            <person name="Deng H.B."/>
            <person name="Yu Y."/>
            <person name="Pak Y."/>
            <person name="O'Dowd B.F."/>
            <person name="George S.R."/>
            <person name="Surratt C.K."/>
            <person name="Uhl G.R."/>
            <person name="Wang J.B."/>
        </authorList>
    </citation>
    <scope>PHOSPHORYLATION AT THR-394</scope>
    <scope>MUTAGENESIS OF THR-394</scope>
</reference>
<reference key="22">
    <citation type="journal article" date="2000" name="J. Biol. Chem.">
        <title>Oligomerization of mu- and delta-opioid receptors. Generation of novel functional properties.</title>
        <authorList>
            <person name="George S.R."/>
            <person name="Fan T."/>
            <person name="Xie Z."/>
            <person name="Tse R."/>
            <person name="Tam V."/>
            <person name="Varghese G."/>
            <person name="O'Dowd B.F."/>
        </authorList>
    </citation>
    <scope>RECEPTOR HETEROOLIGOMERIZATION</scope>
    <scope>INTERACTION WITH OPRD1</scope>
</reference>
<reference key="23">
    <citation type="journal article" date="2000" name="J. Biol. Chem.">
        <title>Mutational analysis of Gbetagamma and phospholipid interaction with G protein-coupled receptor kinase 2.</title>
        <authorList>
            <person name="Carman C.V."/>
            <person name="Barak L.S."/>
            <person name="Chen C."/>
            <person name="Liu-Chen L.Y."/>
            <person name="Onorato J.J."/>
            <person name="Kennedy S.P."/>
            <person name="Caron M.G."/>
            <person name="Benovic J.L."/>
        </authorList>
    </citation>
    <scope>PHOSPHORYLATION BY GRK2</scope>
</reference>
<reference key="24">
    <citation type="journal article" date="2001" name="Biochemistry">
        <title>Constitutive activation of the mu opioid receptor by mutation of D3.49(164), but not D3.32(147): D3.49(164) is critical for stabilization of the inactive form of the receptor and for its expression.</title>
        <authorList>
            <person name="Li J."/>
            <person name="Huang P."/>
            <person name="Chen C."/>
            <person name="de Riel J.K."/>
            <person name="Weinstein H."/>
            <person name="Liu-Chen L.Y."/>
        </authorList>
    </citation>
    <scope>MUTAGENESIS OF ASP-147 AND ASP-164</scope>
</reference>
<reference key="25">
    <citation type="journal article" date="2001" name="Biochemistry">
        <title>Functional role of a conserved motif in TM6 of the rat mu opioid receptor: constitutively active and inactive receptors result from substitutions of Thr6.34(279) with Lys and Asp.</title>
        <authorList>
            <person name="Huang P."/>
            <person name="Li J."/>
            <person name="Chen C."/>
            <person name="Visiers I."/>
            <person name="Weinstein H."/>
            <person name="Liu-Chen L.Y."/>
        </authorList>
    </citation>
    <scope>MUTAGENESIS OF THR-279</scope>
</reference>
<reference key="26">
    <citation type="journal article" date="2001" name="J. Biol. Chem.">
        <title>Threonine 180 is required for G-protein-coupled receptor kinase 3- and beta-arrestin 2-mediated desensitization of the mu-opioid receptor in Xenopus oocytes.</title>
        <authorList>
            <person name="Celver J.P."/>
            <person name="Lowe J."/>
            <person name="Kovoor A."/>
            <person name="Gurevich V.V."/>
            <person name="Chavkin C."/>
        </authorList>
    </citation>
    <scope>FUNCTION</scope>
    <scope>MUTAGENESIS OF THR-180</scope>
</reference>
<reference key="27">
    <citation type="journal article" date="2001" name="J. Biol. Chem.">
        <title>Phosphorylation of Ser363, Thr370, and Ser375 residues within the carboxyl tail differentially regulates mu-opioid receptor internalization.</title>
        <authorList>
            <person name="El Kouhen R."/>
            <person name="Burd A.L."/>
            <person name="Erickson-Herbrandson L.J."/>
            <person name="Chang C.Y."/>
            <person name="Law P.Y."/>
            <person name="Loh H.H."/>
        </authorList>
    </citation>
    <scope>FUNCTION</scope>
    <scope>PHOSPHORYLATION AT SER-363; THR-370 AND SER-375</scope>
    <scope>MUTAGENESIS OF SER-363; THR-370 AND SER-375</scope>
</reference>
<reference key="28">
    <citation type="journal article" date="2002" name="Biochemistry">
        <title>The local environment at the cytoplasmic end of TM6 of the mu opioid receptor differs from those of rhodopsin and monoamine receptors: introduction of an ionic lock between the cytoplasmic ends of helices 3 and 6 by a L6.30(275)E mutation inactivates the mu opioid receptor and reduces the constitutive activity of its T6.34(279)K mutant.</title>
        <authorList>
            <person name="Huang P."/>
            <person name="Visiers I."/>
            <person name="Weinstein H."/>
            <person name="Liu-Chen L.Y."/>
        </authorList>
    </citation>
    <scope>MUTAGENESIS OF LEU-275 AND THR-279</scope>
</reference>
<reference key="29">
    <citation type="journal article" date="2002" name="J. Biol. Chem.">
        <title>Heterodimerization of somatostatin and opioid receptors cross-modulates phosphorylation, internalization, and desensitization.</title>
        <authorList>
            <person name="Pfeiffer M."/>
            <person name="Koch T."/>
            <person name="Schroder H."/>
            <person name="Laugsch M."/>
            <person name="Hollt V."/>
            <person name="Schulz S."/>
        </authorList>
    </citation>
    <scope>FUNCTION</scope>
    <scope>RECEPTOR HETEROOLIGOMERIZATION</scope>
    <scope>INTERACTION WITH SSTR2</scope>
</reference>
<reference key="30">
    <citation type="journal article" date="2003" name="J. Biol. Chem.">
        <title>ADP-ribosylation factor-dependent phospholipase D2 activation is required for agonist-induced mu-opioid receptor endocytosis.</title>
        <authorList>
            <person name="Koch T."/>
            <person name="Brandenburg L.O."/>
            <person name="Schulz S."/>
            <person name="Liang Y."/>
            <person name="Klein J."/>
            <person name="Hollt V."/>
        </authorList>
    </citation>
    <scope>INTERACTION WITH PLD2</scope>
</reference>
<reference key="31">
    <citation type="journal article" date="2003" name="Mol. Pharmacol.">
        <title>Functional interactions between mu opioid and alpha 2A-adrenergic receptors.</title>
        <authorList>
            <person name="Jordan B.A."/>
            <person name="Gomes I."/>
            <person name="Rios C."/>
            <person name="Filipovska J."/>
            <person name="Devi L.A."/>
        </authorList>
    </citation>
    <scope>RECEPTOR HETEROOLIGOMERIZATION</scope>
    <scope>INTERACTION WITH ADRA2A</scope>
</reference>
<reference key="32">
    <citation type="journal article" date="2004" name="Eur. J. Pharmacol.">
        <title>Heterodimerization and cross-desensitization between the mu-opioid receptor and the chemokine CCR5 receptor.</title>
        <authorList>
            <person name="Chen C."/>
            <person name="Li J."/>
            <person name="Bot G."/>
            <person name="Szabo I."/>
            <person name="Rogers T.J."/>
            <person name="Liu-Chen L.Y."/>
        </authorList>
    </citation>
    <scope>RECEPTOR HETEROOLIGOMERIZATION</scope>
    <scope>INTERACTION WITH CCR5</scope>
</reference>
<reference key="33">
    <citation type="journal article" date="2005" name="Brain Res. Mol. Brain Res.">
        <title>Biochemical demonstration of mu-opioid receptor association with Gsalpha: enhancement following morphine exposure.</title>
        <authorList>
            <person name="Chakrabarti S."/>
            <person name="Regec A."/>
            <person name="Gintzler A.R."/>
        </authorList>
    </citation>
    <scope>INTERACTION WITH GNAS</scope>
</reference>
<reference key="34">
    <citation type="journal article" date="2005" name="J. Biol. Chem.">
        <title>Mu and kappa opioid receptors activate ERK/MAPK via different protein kinase C isoforms and secondary messengers in astrocytes.</title>
        <authorList>
            <person name="Belcheva M.M."/>
            <person name="Clark A.L."/>
            <person name="Haas P.D."/>
            <person name="Serna J.S."/>
            <person name="Hahn J.W."/>
            <person name="Kiss A."/>
            <person name="Coscia C.J."/>
        </authorList>
    </citation>
    <scope>FUNCTION</scope>
</reference>
<reference key="35">
    <citation type="journal article" date="2007" name="FASEB J.">
        <title>Receptor heterodimerization leads to a switch in signaling: beta-arrestin2-mediated ERK activation by mu-delta opioid receptor heterodimers.</title>
        <authorList>
            <person name="Rozenfeld R."/>
            <person name="Devi L.A."/>
        </authorList>
    </citation>
    <scope>FUNCTION</scope>
    <scope>RECEPTOR HETEROOLIGOMERIZATION</scope>
    <scope>INTERACTION WITH OPRD1</scope>
</reference>
<reference key="36">
    <citation type="journal article" date="2007" name="J. Biol. Chem.">
        <title>Membrane glycoprotein M6a interacts with the micro-opioid receptor and facilitates receptor endocytosis and recycling.</title>
        <authorList>
            <person name="Wu D.F."/>
            <person name="Koch T."/>
            <person name="Liang Y.J."/>
            <person name="Stumm R."/>
            <person name="Schulz S."/>
            <person name="Schroder H."/>
            <person name="Hollt V."/>
        </authorList>
    </citation>
    <scope>INTERACTION WITH GPM6A</scope>
</reference>
<reference key="37">
    <citation type="journal article" date="2007" name="Mol. Pharmacol.">
        <title>Interaction of the mu-opioid receptor with synaptophysin influences receptor trafficking and signaling.</title>
        <authorList>
            <person name="Liang Y.J."/>
            <person name="Wu D.F."/>
            <person name="Yang L.Q."/>
            <person name="Hollt V."/>
            <person name="Koch T."/>
        </authorList>
    </citation>
    <scope>INTERACTION WITH SYP</scope>
</reference>
<reference key="38">
    <citation type="journal article" date="2006" name="Br. J. Pharmacol.">
        <title>mu opioid and CB1 cannabinoid receptor interactions: reciprocal inhibition of receptor signaling and neuritogenesis.</title>
        <authorList>
            <person name="Rios C."/>
            <person name="Gomes I."/>
            <person name="Devi L.A."/>
        </authorList>
    </citation>
    <scope>FUNCTION</scope>
    <scope>RECEPTOR HETEROOLIGOMERIZATION</scope>
    <scope>INTERACTION WITH CNR1</scope>
</reference>
<reference key="39">
    <citation type="journal article" date="2008" name="Cell. Signal.">
        <title>Morphine-induced mu-opioid receptor rapid desensitization is independent of receptor phosphorylation and beta-arrestins.</title>
        <authorList>
            <person name="Chu J."/>
            <person name="Zheng H."/>
            <person name="Loh H.H."/>
            <person name="Law P.Y."/>
        </authorList>
    </citation>
    <scope>FUNCTION</scope>
    <scope>MUTAGENESIS OF SER-363; THR-370 AND SER-375</scope>
</reference>
<reference key="40">
    <citation type="journal article" date="2008" name="Mol. Pharmacol.">
        <title>Beta-arrestin-dependent mu-opioid receptor-activated extracellular signal-regulated kinases (ERKs) Translocate to Nucleus in Contrast to G protein-dependent ERK activation.</title>
        <authorList>
            <person name="Zheng H."/>
            <person name="Loh H.H."/>
            <person name="Law P.Y."/>
        </authorList>
    </citation>
    <scope>FUNCTION</scope>
</reference>
<reference key="41">
    <citation type="journal article" date="2009" name="Cell. Signal.">
        <title>Regulator of G protein signaling 4 confers selectivity to specific G proteins to modulate mu- and delta-opioid receptor signaling.</title>
        <authorList>
            <person name="Leontiadis L.J."/>
            <person name="Papakonstantinou M.P."/>
            <person name="Georgoussi Z."/>
        </authorList>
    </citation>
    <scope>INTERACTION WITH RGS4</scope>
</reference>
<reference key="42">
    <citation type="journal article" date="2010" name="Mol. Pharmacol.">
        <title>Phosphorylation of the mu-opioid receptor at tyrosine 166 (Tyr3.51) in the DRY motif reduces agonist efficacy.</title>
        <authorList>
            <person name="Clayton C.C."/>
            <person name="Bruchas M.R."/>
            <person name="Lee M.L."/>
            <person name="Chavkin C."/>
        </authorList>
    </citation>
    <scope>PHOSPHORYLATION AT TYR-166</scope>
    <scope>MUTAGENESIS OF TYR-166</scope>
</reference>
<reference key="43">
    <citation type="journal article" date="2011" name="J. Biol. Chem.">
        <title>Modulating micro-opioid receptor phosphorylation switches agonist-dependent signaling as reflected in PKCepsilon activation and dendritic spine stability.</title>
        <authorList>
            <person name="Zheng H."/>
            <person name="Chu J."/>
            <person name="Zhang Y."/>
            <person name="Loh H.H."/>
            <person name="Law P.Y."/>
        </authorList>
    </citation>
    <scope>FUNCTION</scope>
    <scope>MUTAGENESIS OF SER-375</scope>
</reference>
<proteinExistence type="evidence at protein level"/>